<keyword id="KW-0030">Aminoacyl-tRNA synthetase</keyword>
<keyword id="KW-0067">ATP-binding</keyword>
<keyword id="KW-0963">Cytoplasm</keyword>
<keyword id="KW-0436">Ligase</keyword>
<keyword id="KW-0547">Nucleotide-binding</keyword>
<keyword id="KW-0648">Protein biosynthesis</keyword>
<keyword id="KW-1185">Reference proteome</keyword>
<comment type="catalytic activity">
    <reaction evidence="1">
        <text>tRNA(Asn) + L-asparagine + ATP = L-asparaginyl-tRNA(Asn) + AMP + diphosphate + H(+)</text>
        <dbReference type="Rhea" id="RHEA:11180"/>
        <dbReference type="Rhea" id="RHEA-COMP:9659"/>
        <dbReference type="Rhea" id="RHEA-COMP:9674"/>
        <dbReference type="ChEBI" id="CHEBI:15378"/>
        <dbReference type="ChEBI" id="CHEBI:30616"/>
        <dbReference type="ChEBI" id="CHEBI:33019"/>
        <dbReference type="ChEBI" id="CHEBI:58048"/>
        <dbReference type="ChEBI" id="CHEBI:78442"/>
        <dbReference type="ChEBI" id="CHEBI:78515"/>
        <dbReference type="ChEBI" id="CHEBI:456215"/>
        <dbReference type="EC" id="6.1.1.22"/>
    </reaction>
</comment>
<comment type="subunit">
    <text evidence="1">Homodimer.</text>
</comment>
<comment type="subcellular location">
    <subcellularLocation>
        <location evidence="1">Cytoplasm</location>
    </subcellularLocation>
</comment>
<comment type="similarity">
    <text evidence="1">Belongs to the class-II aminoacyl-tRNA synthetase family.</text>
</comment>
<reference key="1">
    <citation type="journal article" date="2007" name="Appl. Environ. Microbiol.">
        <title>Genome sequence of the cellulolytic gliding bacterium Cytophaga hutchinsonii.</title>
        <authorList>
            <person name="Xie G."/>
            <person name="Bruce D.C."/>
            <person name="Challacombe J.F."/>
            <person name="Chertkov O."/>
            <person name="Detter J.C."/>
            <person name="Gilna P."/>
            <person name="Han C.S."/>
            <person name="Lucas S."/>
            <person name="Misra M."/>
            <person name="Myers G.L."/>
            <person name="Richardson P."/>
            <person name="Tapia R."/>
            <person name="Thayer N."/>
            <person name="Thompson L.S."/>
            <person name="Brettin T.S."/>
            <person name="Henrissat B."/>
            <person name="Wilson D.B."/>
            <person name="McBride M.J."/>
        </authorList>
    </citation>
    <scope>NUCLEOTIDE SEQUENCE [LARGE SCALE GENOMIC DNA]</scope>
    <source>
        <strain>ATCC 33406 / DSM 1761 / JCM 20678 / CIP 103989 / IAM 12607 / NBRC 15051 / NCIMB 9469 / D465</strain>
    </source>
</reference>
<sequence length="464" mass="52658">MKRIKIKELLSNSSQYIDQQVVLKGWVRTKRGNKHVAFVALNDGSTIHTIQIVLDVAKFNEEQLKDVTTGACISISGKVVTSQGAGQSIEVQGDTLEVIGVADPETYPLQKKGHSLEFLREIAHLRPRTNTFSCVLRLRHAMAFAVHSFFNEKGFVYVHTPIITGSDAEGAGAMFQVTTLDLKNPSKTKEGEVDFTKDFFGKATNLTVSGQLEGELAAMALGEVYTFGPTFRAENSNTTRHLAEFWMIEPEMAFYEIQDNMDLAEEFLKYLVKYALDNCIDDLNFLNEMYDKELIERLKSVVETPFVRLNYTEAVDILIATKQKFEYKVEWGIDLQSEHERYLVEKHFKKPVILTNYPKAIKAFYMKANEDGKTVRAMDVLFPGIGEIIGGSQREDNLEKLQERCKEVGIHENDIWWYLETRKFGSAPHSGFGLGFERLMLFVTGMGNIRDVIPFPRTPQSAEF</sequence>
<dbReference type="EC" id="6.1.1.22" evidence="1"/>
<dbReference type="EMBL" id="CP000383">
    <property type="protein sequence ID" value="ABG60416.1"/>
    <property type="molecule type" value="Genomic_DNA"/>
</dbReference>
<dbReference type="RefSeq" id="WP_011586526.1">
    <property type="nucleotide sequence ID" value="NC_008255.1"/>
</dbReference>
<dbReference type="SMR" id="Q11Q97"/>
<dbReference type="STRING" id="269798.CHU_3176"/>
<dbReference type="KEGG" id="chu:CHU_3176"/>
<dbReference type="eggNOG" id="COG0017">
    <property type="taxonomic scope" value="Bacteria"/>
</dbReference>
<dbReference type="HOGENOM" id="CLU_004553_2_0_10"/>
<dbReference type="OrthoDB" id="9802326at2"/>
<dbReference type="Proteomes" id="UP000001822">
    <property type="component" value="Chromosome"/>
</dbReference>
<dbReference type="GO" id="GO:0005737">
    <property type="term" value="C:cytoplasm"/>
    <property type="evidence" value="ECO:0007669"/>
    <property type="project" value="UniProtKB-SubCell"/>
</dbReference>
<dbReference type="GO" id="GO:0004816">
    <property type="term" value="F:asparagine-tRNA ligase activity"/>
    <property type="evidence" value="ECO:0007669"/>
    <property type="project" value="UniProtKB-UniRule"/>
</dbReference>
<dbReference type="GO" id="GO:0005524">
    <property type="term" value="F:ATP binding"/>
    <property type="evidence" value="ECO:0007669"/>
    <property type="project" value="UniProtKB-UniRule"/>
</dbReference>
<dbReference type="GO" id="GO:0003676">
    <property type="term" value="F:nucleic acid binding"/>
    <property type="evidence" value="ECO:0007669"/>
    <property type="project" value="InterPro"/>
</dbReference>
<dbReference type="GO" id="GO:0006421">
    <property type="term" value="P:asparaginyl-tRNA aminoacylation"/>
    <property type="evidence" value="ECO:0007669"/>
    <property type="project" value="UniProtKB-UniRule"/>
</dbReference>
<dbReference type="CDD" id="cd00776">
    <property type="entry name" value="AsxRS_core"/>
    <property type="match status" value="1"/>
</dbReference>
<dbReference type="CDD" id="cd04318">
    <property type="entry name" value="EcAsnRS_like_N"/>
    <property type="match status" value="1"/>
</dbReference>
<dbReference type="FunFam" id="3.30.930.10:FF:000016">
    <property type="entry name" value="Asparagine--tRNA ligase"/>
    <property type="match status" value="1"/>
</dbReference>
<dbReference type="Gene3D" id="3.30.930.10">
    <property type="entry name" value="Bira Bifunctional Protein, Domain 2"/>
    <property type="match status" value="1"/>
</dbReference>
<dbReference type="Gene3D" id="2.40.50.140">
    <property type="entry name" value="Nucleic acid-binding proteins"/>
    <property type="match status" value="1"/>
</dbReference>
<dbReference type="HAMAP" id="MF_00534">
    <property type="entry name" value="Asn_tRNA_synth"/>
    <property type="match status" value="1"/>
</dbReference>
<dbReference type="InterPro" id="IPR004364">
    <property type="entry name" value="Aa-tRNA-synt_II"/>
</dbReference>
<dbReference type="InterPro" id="IPR006195">
    <property type="entry name" value="aa-tRNA-synth_II"/>
</dbReference>
<dbReference type="InterPro" id="IPR045864">
    <property type="entry name" value="aa-tRNA-synth_II/BPL/LPL"/>
</dbReference>
<dbReference type="InterPro" id="IPR004522">
    <property type="entry name" value="Asn-tRNA-ligase"/>
</dbReference>
<dbReference type="InterPro" id="IPR002312">
    <property type="entry name" value="Asp/Asn-tRNA-synth_IIb"/>
</dbReference>
<dbReference type="InterPro" id="IPR012340">
    <property type="entry name" value="NA-bd_OB-fold"/>
</dbReference>
<dbReference type="InterPro" id="IPR004365">
    <property type="entry name" value="NA-bd_OB_tRNA"/>
</dbReference>
<dbReference type="NCBIfam" id="TIGR00457">
    <property type="entry name" value="asnS"/>
    <property type="match status" value="1"/>
</dbReference>
<dbReference type="NCBIfam" id="NF003037">
    <property type="entry name" value="PRK03932.1"/>
    <property type="match status" value="1"/>
</dbReference>
<dbReference type="PANTHER" id="PTHR22594:SF34">
    <property type="entry name" value="ASPARAGINE--TRNA LIGASE, MITOCHONDRIAL-RELATED"/>
    <property type="match status" value="1"/>
</dbReference>
<dbReference type="PANTHER" id="PTHR22594">
    <property type="entry name" value="ASPARTYL/LYSYL-TRNA SYNTHETASE"/>
    <property type="match status" value="1"/>
</dbReference>
<dbReference type="Pfam" id="PF00152">
    <property type="entry name" value="tRNA-synt_2"/>
    <property type="match status" value="1"/>
</dbReference>
<dbReference type="Pfam" id="PF01336">
    <property type="entry name" value="tRNA_anti-codon"/>
    <property type="match status" value="1"/>
</dbReference>
<dbReference type="PRINTS" id="PR01042">
    <property type="entry name" value="TRNASYNTHASP"/>
</dbReference>
<dbReference type="SUPFAM" id="SSF55681">
    <property type="entry name" value="Class II aaRS and biotin synthetases"/>
    <property type="match status" value="1"/>
</dbReference>
<dbReference type="SUPFAM" id="SSF50249">
    <property type="entry name" value="Nucleic acid-binding proteins"/>
    <property type="match status" value="1"/>
</dbReference>
<dbReference type="PROSITE" id="PS50862">
    <property type="entry name" value="AA_TRNA_LIGASE_II"/>
    <property type="match status" value="1"/>
</dbReference>
<proteinExistence type="inferred from homology"/>
<feature type="chain" id="PRO_1000211900" description="Asparagine--tRNA ligase">
    <location>
        <begin position="1"/>
        <end position="464"/>
    </location>
</feature>
<evidence type="ECO:0000255" key="1">
    <source>
        <dbReference type="HAMAP-Rule" id="MF_00534"/>
    </source>
</evidence>
<organism>
    <name type="scientific">Cytophaga hutchinsonii (strain ATCC 33406 / DSM 1761 / CIP 103989 / NBRC 15051 / NCIMB 9469 / D465)</name>
    <dbReference type="NCBI Taxonomy" id="269798"/>
    <lineage>
        <taxon>Bacteria</taxon>
        <taxon>Pseudomonadati</taxon>
        <taxon>Bacteroidota</taxon>
        <taxon>Cytophagia</taxon>
        <taxon>Cytophagales</taxon>
        <taxon>Cytophagaceae</taxon>
        <taxon>Cytophaga</taxon>
    </lineage>
</organism>
<name>SYN_CYTH3</name>
<accession>Q11Q97</accession>
<protein>
    <recommendedName>
        <fullName evidence="1">Asparagine--tRNA ligase</fullName>
        <ecNumber evidence="1">6.1.1.22</ecNumber>
    </recommendedName>
    <alternativeName>
        <fullName evidence="1">Asparaginyl-tRNA synthetase</fullName>
        <shortName evidence="1">AsnRS</shortName>
    </alternativeName>
</protein>
<gene>
    <name evidence="1" type="primary">asnS</name>
    <name type="ordered locus">CHU_3176</name>
</gene>